<feature type="chain" id="PRO_0000435309" description="Sporulation-specific cell division protein SsgB">
    <location>
        <begin position="1"/>
        <end position="143"/>
    </location>
</feature>
<sequence>MTIRHDSITAELALRLVVPGGAPVPVAATVRYEPADPYAISIGFRTGADEVVEWTFARQLLSDGVRRPAGDGDVQVWPAAQSGGRIVCLSLSSPSGHALFEMPRSEVLAFLRRTYSAVPLGGESDIIDLDAELALLIWGGPER</sequence>
<organism evidence="6">
    <name type="scientific">Frankia casuarinae (strain DSM 45818 / CECT 9043 / HFP020203 / CcI3)</name>
    <dbReference type="NCBI Taxonomy" id="106370"/>
    <lineage>
        <taxon>Bacteria</taxon>
        <taxon>Bacillati</taxon>
        <taxon>Actinomycetota</taxon>
        <taxon>Actinomycetes</taxon>
        <taxon>Frankiales</taxon>
        <taxon>Frankiaceae</taxon>
        <taxon>Frankia</taxon>
    </lineage>
</organism>
<name>SSGB_FRACC</name>
<keyword id="KW-0131">Cell cycle</keyword>
<keyword id="KW-0132">Cell division</keyword>
<keyword id="KW-1185">Reference proteome</keyword>
<keyword id="KW-0717">Septation</keyword>
<keyword id="KW-0749">Sporulation</keyword>
<accession>Q2JDA6</accession>
<proteinExistence type="inferred from homology"/>
<gene>
    <name evidence="4" type="primary">ssgB</name>
    <name evidence="6" type="ordered locus">Francci3_1359</name>
</gene>
<reference key="1">
    <citation type="journal article" date="2009" name="J. Biol. Chem.">
        <title>Structural and functional characterizations of SsgB, a conserved activator of developmental cell division in morphologically complex actinomycetes.</title>
        <authorList>
            <person name="Xu Q."/>
            <person name="Traag B.A."/>
            <person name="Willemse J."/>
            <person name="McMullan D."/>
            <person name="Miller M.D."/>
            <person name="Elsliger M.A."/>
            <person name="Abdubek P."/>
            <person name="Astakhova T."/>
            <person name="Axelrod H.L."/>
            <person name="Bakolitsa C."/>
            <person name="Carlton D."/>
            <person name="Chen C."/>
            <person name="Chiu H.J."/>
            <person name="Chruszcz M."/>
            <person name="Clayton T."/>
            <person name="Das D."/>
            <person name="Deller M.C."/>
            <person name="Duan L."/>
            <person name="Ellrott K."/>
            <person name="Ernst D."/>
            <person name="Farr C.L."/>
            <person name="Feuerhelm J."/>
            <person name="Grant J.C."/>
            <person name="Grzechnik A."/>
            <person name="Grzechnik S.K."/>
            <person name="Han G.W."/>
            <person name="Jaroszewski L."/>
            <person name="Jin K.K."/>
            <person name="Klock H.E."/>
            <person name="Knuth M.W."/>
            <person name="Kozbial P."/>
            <person name="Krishna S.S."/>
            <person name="Kumar A."/>
            <person name="Marciano D."/>
            <person name="Minor W."/>
            <person name="Mommaas A.M."/>
            <person name="Morse A.T."/>
            <person name="Nigoghossian E."/>
            <person name="Nopakun A."/>
            <person name="Okach L."/>
            <person name="Oommachen S."/>
            <person name="Paulsen J."/>
            <person name="Puckett C."/>
            <person name="Reyes R."/>
            <person name="Rife C.L."/>
            <person name="Sefcovic N."/>
            <person name="Tien H.J."/>
            <person name="Trame C.B."/>
            <person name="van den Bedem H."/>
            <person name="Wang S."/>
            <person name="Weekes D."/>
            <person name="Hodgson K.O."/>
            <person name="Wooley J."/>
            <person name="Deacon A.M."/>
            <person name="Godzik A."/>
            <person name="Lesley S.A."/>
            <person name="Wilson I.A."/>
            <person name="van Wezel G.P."/>
        </authorList>
    </citation>
    <scope>NUCLEOTIDE SEQUENCE [GENOMIC DNA]</scope>
    <scope>FUNCTION</scope>
    <source>
        <strain evidence="4">DSM 45818 / CECT 9043 / HFP020203 / CcI3</strain>
    </source>
</reference>
<reference evidence="6 7" key="2">
    <citation type="journal article" date="2007" name="Genome Res.">
        <title>Genome characteristics of facultatively symbiotic Frankia sp. strains reflect host range and host plant biogeography.</title>
        <authorList>
            <person name="Normand P."/>
            <person name="Lapierre P."/>
            <person name="Tisa L.S."/>
            <person name="Gogarten J.P."/>
            <person name="Alloisio N."/>
            <person name="Bagnarol E."/>
            <person name="Bassi C.A."/>
            <person name="Berry A.M."/>
            <person name="Bickhart D.M."/>
            <person name="Choisne N."/>
            <person name="Couloux A."/>
            <person name="Cournoyer B."/>
            <person name="Cruveiller S."/>
            <person name="Daubin V."/>
            <person name="Demange N."/>
            <person name="Francino M.P."/>
            <person name="Goltsman E."/>
            <person name="Huang Y."/>
            <person name="Kopp O.R."/>
            <person name="Labarre L."/>
            <person name="Lapidus A."/>
            <person name="Lavire C."/>
            <person name="Marechal J."/>
            <person name="Martinez M."/>
            <person name="Mastronunzio J.E."/>
            <person name="Mullin B.C."/>
            <person name="Niemann J."/>
            <person name="Pujic P."/>
            <person name="Rawnsley T."/>
            <person name="Rouy Z."/>
            <person name="Schenowitz C."/>
            <person name="Sellstedt A."/>
            <person name="Tavares F."/>
            <person name="Tomkins J.P."/>
            <person name="Vallenet D."/>
            <person name="Valverde C."/>
            <person name="Wall L.G."/>
            <person name="Wang Y."/>
            <person name="Medigue C."/>
            <person name="Benson D.R."/>
        </authorList>
    </citation>
    <scope>NUCLEOTIDE SEQUENCE [LARGE SCALE GENOMIC DNA]</scope>
    <source>
        <strain evidence="6 7">DSM 45818 / CECT 9043 / HFP020203 / CcI3</strain>
    </source>
</reference>
<comment type="function">
    <text evidence="1 2 3">Involved in sporulation-specific cell division (PubMed:19567872). Required for early stages of sporulation. Important in the process of growth cessation prior to sporulation-specific cell division. Recruits cell division protein FtsZ to the future septum sites and tethers the contractile ring structure (Z ring) to the cytoplasmic membrane during sporulation. Stimulates polymerization and filament length of FtsZ in vitro (By similarity).</text>
</comment>
<comment type="subunit">
    <text evidence="1 2">Interacts with SsgA. Interacts with FtsZ (via N-terminus).</text>
</comment>
<comment type="subcellular location">
    <subcellularLocation>
        <location evidence="2">Cell septum</location>
    </subcellularLocation>
    <text evidence="2">Localizes to the divisome in sporogenic aerial hyphae in a ladder-like manner. Temporospatial localization is controlled by SsgA and it colocalizes with SsgA in presporulation foci. Localizes to the septum sites prior to FtsZ and after that colocalizes with FtsZ at the divisome throughout cell division.</text>
</comment>
<comment type="similarity">
    <text evidence="5">Belongs to the SsgA family.</text>
</comment>
<dbReference type="EMBL" id="CP000249">
    <property type="protein sequence ID" value="ABD10736.1"/>
    <property type="molecule type" value="Genomic_DNA"/>
</dbReference>
<dbReference type="RefSeq" id="WP_009739629.1">
    <property type="nucleotide sequence ID" value="NZ_JENI01000007.1"/>
</dbReference>
<dbReference type="SMR" id="Q2JDA6"/>
<dbReference type="STRING" id="106370.Francci3_1359"/>
<dbReference type="KEGG" id="fra:Francci3_1359"/>
<dbReference type="eggNOG" id="ENOG5032RFA">
    <property type="taxonomic scope" value="Bacteria"/>
</dbReference>
<dbReference type="HOGENOM" id="CLU_126599_0_1_11"/>
<dbReference type="OrthoDB" id="3853096at2"/>
<dbReference type="PhylomeDB" id="Q2JDA6"/>
<dbReference type="Proteomes" id="UP000001937">
    <property type="component" value="Chromosome"/>
</dbReference>
<dbReference type="GO" id="GO:0030428">
    <property type="term" value="C:cell septum"/>
    <property type="evidence" value="ECO:0000250"/>
    <property type="project" value="UniProtKB"/>
</dbReference>
<dbReference type="GO" id="GO:1990586">
    <property type="term" value="C:divisome complex"/>
    <property type="evidence" value="ECO:0000250"/>
    <property type="project" value="UniProtKB"/>
</dbReference>
<dbReference type="GO" id="GO:0031160">
    <property type="term" value="C:spore wall"/>
    <property type="evidence" value="ECO:0000250"/>
    <property type="project" value="UniProtKB"/>
</dbReference>
<dbReference type="GO" id="GO:0043936">
    <property type="term" value="P:asexual sporulation resulting in formation of a cellular spore"/>
    <property type="evidence" value="ECO:0000314"/>
    <property type="project" value="UniProtKB"/>
</dbReference>
<dbReference type="GO" id="GO:0051301">
    <property type="term" value="P:cell division"/>
    <property type="evidence" value="ECO:0000314"/>
    <property type="project" value="UniProtKB"/>
</dbReference>
<dbReference type="GO" id="GO:0090529">
    <property type="term" value="P:cell septum assembly"/>
    <property type="evidence" value="ECO:0000250"/>
    <property type="project" value="UniProtKB"/>
</dbReference>
<dbReference type="GO" id="GO:0000917">
    <property type="term" value="P:division septum assembly"/>
    <property type="evidence" value="ECO:0007669"/>
    <property type="project" value="UniProtKB-KW"/>
</dbReference>
<dbReference type="GO" id="GO:0030448">
    <property type="term" value="P:hyphal growth"/>
    <property type="evidence" value="ECO:0000250"/>
    <property type="project" value="UniProtKB"/>
</dbReference>
<dbReference type="GO" id="GO:0051781">
    <property type="term" value="P:positive regulation of cell division"/>
    <property type="evidence" value="ECO:0000250"/>
    <property type="project" value="UniProtKB"/>
</dbReference>
<dbReference type="GO" id="GO:0042244">
    <property type="term" value="P:spore wall assembly"/>
    <property type="evidence" value="ECO:0000250"/>
    <property type="project" value="UniProtKB"/>
</dbReference>
<dbReference type="FunFam" id="2.30.31.20:FF:000001">
    <property type="entry name" value="SsgA family sporulation/cell division regulator"/>
    <property type="match status" value="1"/>
</dbReference>
<dbReference type="Gene3D" id="2.30.31.20">
    <property type="entry name" value="Sporulation-specific cell division protein SsgB"/>
    <property type="match status" value="1"/>
</dbReference>
<dbReference type="InterPro" id="IPR006776">
    <property type="entry name" value="SsgB"/>
</dbReference>
<dbReference type="InterPro" id="IPR038658">
    <property type="entry name" value="SsgB_sf"/>
</dbReference>
<dbReference type="Pfam" id="PF04686">
    <property type="entry name" value="SsgA"/>
    <property type="match status" value="1"/>
</dbReference>
<evidence type="ECO:0000250" key="1">
    <source>
        <dbReference type="UniProtKB" id="Q47N25"/>
    </source>
</evidence>
<evidence type="ECO:0000250" key="2">
    <source>
        <dbReference type="UniProtKB" id="Q9L268"/>
    </source>
</evidence>
<evidence type="ECO:0000269" key="3">
    <source>
    </source>
</evidence>
<evidence type="ECO:0000303" key="4">
    <source>
    </source>
</evidence>
<evidence type="ECO:0000305" key="5"/>
<evidence type="ECO:0000312" key="6">
    <source>
        <dbReference type="EMBL" id="ABD10736.1"/>
    </source>
</evidence>
<evidence type="ECO:0000312" key="7">
    <source>
        <dbReference type="Proteomes" id="UP000001937"/>
    </source>
</evidence>
<protein>
    <recommendedName>
        <fullName evidence="4">Sporulation-specific cell division protein SsgB</fullName>
    </recommendedName>
    <alternativeName>
        <fullName evidence="4">Sporulation of Streptomyces griseus-like protein B</fullName>
    </alternativeName>
    <alternativeName>
        <fullName evidence="4">SsgA-like protein B</fullName>
        <shortName evidence="4">SALP B</shortName>
    </alternativeName>
</protein>